<organism>
    <name type="scientific">Oryza sativa subsp. indica</name>
    <name type="common">Rice</name>
    <dbReference type="NCBI Taxonomy" id="39946"/>
    <lineage>
        <taxon>Eukaryota</taxon>
        <taxon>Viridiplantae</taxon>
        <taxon>Streptophyta</taxon>
        <taxon>Embryophyta</taxon>
        <taxon>Tracheophyta</taxon>
        <taxon>Spermatophyta</taxon>
        <taxon>Magnoliopsida</taxon>
        <taxon>Liliopsida</taxon>
        <taxon>Poales</taxon>
        <taxon>Poaceae</taxon>
        <taxon>BOP clade</taxon>
        <taxon>Oryzoideae</taxon>
        <taxon>Oryzeae</taxon>
        <taxon>Oryzinae</taxon>
        <taxon>Oryza</taxon>
        <taxon>Oryza sativa</taxon>
    </lineage>
</organism>
<name>STLP1_ORYSI</name>
<gene>
    <name evidence="5" type="primary">STLP1</name>
    <name evidence="6" type="ORF">OsI_04506</name>
</gene>
<feature type="chain" id="PRO_0000434313" description="Sialyltransferase-like protein 1">
    <location>
        <begin position="1"/>
        <end position="393"/>
    </location>
</feature>
<feature type="topological domain" description="Cytoplasmic" evidence="5">
    <location>
        <begin position="1"/>
        <end position="8"/>
    </location>
</feature>
<feature type="transmembrane region" description="Helical; Signal-anchor for type II membrane protein" evidence="3">
    <location>
        <begin position="9"/>
        <end position="27"/>
    </location>
</feature>
<feature type="topological domain" description="Lumenal" evidence="5">
    <location>
        <begin position="28"/>
        <end position="393"/>
    </location>
</feature>
<feature type="glycosylation site" description="N-linked (GlcNAc...) asparagine" evidence="4">
    <location>
        <position position="49"/>
    </location>
</feature>
<feature type="glycosylation site" description="N-linked (GlcNAc...) asparagine" evidence="4">
    <location>
        <position position="212"/>
    </location>
</feature>
<feature type="glycosylation site" description="N-linked (GlcNAc...) asparagine" evidence="4">
    <location>
        <position position="258"/>
    </location>
</feature>
<sequence>MKRPLRRPFAVLLFVVLCAAASFPSVLRRSVGPAPVLAPLPPLDPARLNATLLRLAAADPSEAPLRRDVDDLLEGRLPASSARARAWRLRGDRLHLHLRHHQFPVYRRGHHPDHDHDPLLHPLPRQELLLDPSLRRALRSWHRLRRHDPGVLRNLPSLLSLPGRIPSCAVVGNSGILLGASHGALIDSHAAVFRLNNARISGFAANVGAKTNLSFINSNVLHLCARRPNCFCHPYGDGVPILLYICQAAHFLDVASCNASSRSLHAASISVTDPRLDVLCARIVKYYSLRRFVAETGRAAEEWSSTRDAAMFHYSSGMQAIMVAVGVCDRVSVFGFGKAADAKHHYHSNQKAELDLHDYKAEYAFYRDLADRPEVVPFLNDAGIAVPPVVFYH</sequence>
<dbReference type="EC" id="2.4.99.-" evidence="5"/>
<dbReference type="EMBL" id="CM000126">
    <property type="protein sequence ID" value="EAY76560.1"/>
    <property type="molecule type" value="Genomic_DNA"/>
</dbReference>
<dbReference type="SMR" id="A2WX64"/>
<dbReference type="STRING" id="39946.A2WX64"/>
<dbReference type="GlyCosmos" id="A2WX64">
    <property type="glycosylation" value="3 sites, No reported glycans"/>
</dbReference>
<dbReference type="EnsemblPlants" id="BGIOSGA004835-TA">
    <property type="protein sequence ID" value="BGIOSGA004835-PA"/>
    <property type="gene ID" value="BGIOSGA004835"/>
</dbReference>
<dbReference type="EnsemblPlants" id="OsGoSa_01g0040090.01">
    <property type="protein sequence ID" value="OsGoSa_01g0040090.01"/>
    <property type="gene ID" value="OsGoSa_01g0040090"/>
</dbReference>
<dbReference type="EnsemblPlants" id="OsIR64_01g0039540.01">
    <property type="protein sequence ID" value="OsIR64_01g0039540.01"/>
    <property type="gene ID" value="OsIR64_01g0039540"/>
</dbReference>
<dbReference type="EnsemblPlants" id="OsKYG_01g0039840.01">
    <property type="protein sequence ID" value="OsKYG_01g0039840.01"/>
    <property type="gene ID" value="OsKYG_01g0039840"/>
</dbReference>
<dbReference type="EnsemblPlants" id="OsLaMu_01g0039930.01">
    <property type="protein sequence ID" value="OsLaMu_01g0039930.01"/>
    <property type="gene ID" value="OsLaMu_01g0039930"/>
</dbReference>
<dbReference type="EnsemblPlants" id="OsLima_01g0039900.01">
    <property type="protein sequence ID" value="OsLima_01g0039900.01"/>
    <property type="gene ID" value="OsLima_01g0039900"/>
</dbReference>
<dbReference type="EnsemblPlants" id="OsLiXu_01g0040050.01">
    <property type="protein sequence ID" value="OsLiXu_01g0040050.01"/>
    <property type="gene ID" value="OsLiXu_01g0040050"/>
</dbReference>
<dbReference type="EnsemblPlants" id="OsMH63_01G040740_01">
    <property type="protein sequence ID" value="OsMH63_01G040740_01"/>
    <property type="gene ID" value="OsMH63_01G040740"/>
</dbReference>
<dbReference type="EnsemblPlants" id="OsPr106_01g0039870.01">
    <property type="protein sequence ID" value="OsPr106_01g0039870.01"/>
    <property type="gene ID" value="OsPr106_01g0039870"/>
</dbReference>
<dbReference type="EnsemblPlants" id="OsZS97_01G040080_01">
    <property type="protein sequence ID" value="OsZS97_01G040080_01"/>
    <property type="gene ID" value="OsZS97_01G040080"/>
</dbReference>
<dbReference type="Gramene" id="BGIOSGA004835-TA">
    <property type="protein sequence ID" value="BGIOSGA004835-PA"/>
    <property type="gene ID" value="BGIOSGA004835"/>
</dbReference>
<dbReference type="Gramene" id="OsGoSa_01g0040090.01">
    <property type="protein sequence ID" value="OsGoSa_01g0040090.01"/>
    <property type="gene ID" value="OsGoSa_01g0040090"/>
</dbReference>
<dbReference type="Gramene" id="OsIR64_01g0039540.01">
    <property type="protein sequence ID" value="OsIR64_01g0039540.01"/>
    <property type="gene ID" value="OsIR64_01g0039540"/>
</dbReference>
<dbReference type="Gramene" id="OsKYG_01g0039840.01">
    <property type="protein sequence ID" value="OsKYG_01g0039840.01"/>
    <property type="gene ID" value="OsKYG_01g0039840"/>
</dbReference>
<dbReference type="Gramene" id="OsLaMu_01g0039930.01">
    <property type="protein sequence ID" value="OsLaMu_01g0039930.01"/>
    <property type="gene ID" value="OsLaMu_01g0039930"/>
</dbReference>
<dbReference type="Gramene" id="OsLima_01g0039900.01">
    <property type="protein sequence ID" value="OsLima_01g0039900.01"/>
    <property type="gene ID" value="OsLima_01g0039900"/>
</dbReference>
<dbReference type="Gramene" id="OsLiXu_01g0040050.01">
    <property type="protein sequence ID" value="OsLiXu_01g0040050.01"/>
    <property type="gene ID" value="OsLiXu_01g0040050"/>
</dbReference>
<dbReference type="Gramene" id="OsMH63_01G040740_01">
    <property type="protein sequence ID" value="OsMH63_01G040740_01"/>
    <property type="gene ID" value="OsMH63_01G040740"/>
</dbReference>
<dbReference type="Gramene" id="OsPr106_01g0039870.01">
    <property type="protein sequence ID" value="OsPr106_01g0039870.01"/>
    <property type="gene ID" value="OsPr106_01g0039870"/>
</dbReference>
<dbReference type="Gramene" id="OsZS97_01G040080_01">
    <property type="protein sequence ID" value="OsZS97_01G040080_01"/>
    <property type="gene ID" value="OsZS97_01G040080"/>
</dbReference>
<dbReference type="HOGENOM" id="CLU_044787_1_0_1"/>
<dbReference type="OMA" id="RERCNCH"/>
<dbReference type="OrthoDB" id="10264956at2759"/>
<dbReference type="Proteomes" id="UP000007015">
    <property type="component" value="Chromosome 1"/>
</dbReference>
<dbReference type="GO" id="GO:0000139">
    <property type="term" value="C:Golgi membrane"/>
    <property type="evidence" value="ECO:0007669"/>
    <property type="project" value="UniProtKB-SubCell"/>
</dbReference>
<dbReference type="GO" id="GO:0008373">
    <property type="term" value="F:sialyltransferase activity"/>
    <property type="evidence" value="ECO:0007669"/>
    <property type="project" value="EnsemblPlants"/>
</dbReference>
<dbReference type="GO" id="GO:0006486">
    <property type="term" value="P:protein glycosylation"/>
    <property type="evidence" value="ECO:0007669"/>
    <property type="project" value="InterPro"/>
</dbReference>
<dbReference type="CDD" id="cd19952">
    <property type="entry name" value="GT29"/>
    <property type="match status" value="1"/>
</dbReference>
<dbReference type="FunFam" id="3.90.1480.20:FF:000016">
    <property type="entry name" value="Sialyltransferase-like protein 3"/>
    <property type="match status" value="1"/>
</dbReference>
<dbReference type="Gene3D" id="3.90.1480.20">
    <property type="entry name" value="Glycosyl transferase family 29"/>
    <property type="match status" value="1"/>
</dbReference>
<dbReference type="InterPro" id="IPR001675">
    <property type="entry name" value="Glyco_trans_29"/>
</dbReference>
<dbReference type="InterPro" id="IPR038578">
    <property type="entry name" value="GT29-like_sf"/>
</dbReference>
<dbReference type="PANTHER" id="PTHR46779">
    <property type="entry name" value="BETA-1,6-GALACTOSYLTRANSFERASE GALT29A"/>
    <property type="match status" value="1"/>
</dbReference>
<dbReference type="PANTHER" id="PTHR46779:SF1">
    <property type="entry name" value="BETA-1,6-GALACTOSYLTRANSFERASE GALT29A"/>
    <property type="match status" value="1"/>
</dbReference>
<dbReference type="Pfam" id="PF00777">
    <property type="entry name" value="Glyco_transf_29"/>
    <property type="match status" value="1"/>
</dbReference>
<keyword id="KW-0325">Glycoprotein</keyword>
<keyword id="KW-0328">Glycosyltransferase</keyword>
<keyword id="KW-0333">Golgi apparatus</keyword>
<keyword id="KW-0472">Membrane</keyword>
<keyword id="KW-1185">Reference proteome</keyword>
<keyword id="KW-0735">Signal-anchor</keyword>
<keyword id="KW-0808">Transferase</keyword>
<keyword id="KW-0812">Transmembrane</keyword>
<keyword id="KW-1133">Transmembrane helix</keyword>
<protein>
    <recommendedName>
        <fullName evidence="5">Sialyltransferase-like protein 1</fullName>
        <ecNumber evidence="5">2.4.99.-</ecNumber>
    </recommendedName>
</protein>
<reference key="1">
    <citation type="journal article" date="2005" name="PLoS Biol.">
        <title>The genomes of Oryza sativa: a history of duplications.</title>
        <authorList>
            <person name="Yu J."/>
            <person name="Wang J."/>
            <person name="Lin W."/>
            <person name="Li S."/>
            <person name="Li H."/>
            <person name="Zhou J."/>
            <person name="Ni P."/>
            <person name="Dong W."/>
            <person name="Hu S."/>
            <person name="Zeng C."/>
            <person name="Zhang J."/>
            <person name="Zhang Y."/>
            <person name="Li R."/>
            <person name="Xu Z."/>
            <person name="Li S."/>
            <person name="Li X."/>
            <person name="Zheng H."/>
            <person name="Cong L."/>
            <person name="Lin L."/>
            <person name="Yin J."/>
            <person name="Geng J."/>
            <person name="Li G."/>
            <person name="Shi J."/>
            <person name="Liu J."/>
            <person name="Lv H."/>
            <person name="Li J."/>
            <person name="Wang J."/>
            <person name="Deng Y."/>
            <person name="Ran L."/>
            <person name="Shi X."/>
            <person name="Wang X."/>
            <person name="Wu Q."/>
            <person name="Li C."/>
            <person name="Ren X."/>
            <person name="Wang J."/>
            <person name="Wang X."/>
            <person name="Li D."/>
            <person name="Liu D."/>
            <person name="Zhang X."/>
            <person name="Ji Z."/>
            <person name="Zhao W."/>
            <person name="Sun Y."/>
            <person name="Zhang Z."/>
            <person name="Bao J."/>
            <person name="Han Y."/>
            <person name="Dong L."/>
            <person name="Ji J."/>
            <person name="Chen P."/>
            <person name="Wu S."/>
            <person name="Liu J."/>
            <person name="Xiao Y."/>
            <person name="Bu D."/>
            <person name="Tan J."/>
            <person name="Yang L."/>
            <person name="Ye C."/>
            <person name="Zhang J."/>
            <person name="Xu J."/>
            <person name="Zhou Y."/>
            <person name="Yu Y."/>
            <person name="Zhang B."/>
            <person name="Zhuang S."/>
            <person name="Wei H."/>
            <person name="Liu B."/>
            <person name="Lei M."/>
            <person name="Yu H."/>
            <person name="Li Y."/>
            <person name="Xu H."/>
            <person name="Wei S."/>
            <person name="He X."/>
            <person name="Fang L."/>
            <person name="Zhang Z."/>
            <person name="Zhang Y."/>
            <person name="Huang X."/>
            <person name="Su Z."/>
            <person name="Tong W."/>
            <person name="Li J."/>
            <person name="Tong Z."/>
            <person name="Li S."/>
            <person name="Ye J."/>
            <person name="Wang L."/>
            <person name="Fang L."/>
            <person name="Lei T."/>
            <person name="Chen C.-S."/>
            <person name="Chen H.-C."/>
            <person name="Xu Z."/>
            <person name="Li H."/>
            <person name="Huang H."/>
            <person name="Zhang F."/>
            <person name="Xu H."/>
            <person name="Li N."/>
            <person name="Zhao C."/>
            <person name="Li S."/>
            <person name="Dong L."/>
            <person name="Huang Y."/>
            <person name="Li L."/>
            <person name="Xi Y."/>
            <person name="Qi Q."/>
            <person name="Li W."/>
            <person name="Zhang B."/>
            <person name="Hu W."/>
            <person name="Zhang Y."/>
            <person name="Tian X."/>
            <person name="Jiao Y."/>
            <person name="Liang X."/>
            <person name="Jin J."/>
            <person name="Gao L."/>
            <person name="Zheng W."/>
            <person name="Hao B."/>
            <person name="Liu S.-M."/>
            <person name="Wang W."/>
            <person name="Yuan L."/>
            <person name="Cao M."/>
            <person name="McDermott J."/>
            <person name="Samudrala R."/>
            <person name="Wang J."/>
            <person name="Wong G.K.-S."/>
            <person name="Yang H."/>
        </authorList>
    </citation>
    <scope>NUCLEOTIDE SEQUENCE [LARGE SCALE GENOMIC DNA]</scope>
    <source>
        <strain>cv. 93-11</strain>
    </source>
</reference>
<accession>A2WX64</accession>
<comment type="function">
    <text evidence="1">Possesses sialyltransferase-like activity in vitro. Transfers sialic acid to the oligosaccharide Gal-beta-1,3-GalNAc and to glycoproteins such as asialofetuin, alpha-1-acid glycoprotein (NeuAc-alpha-2,3-Gal-beta-1,3-GalNAc-) and andasialo-alpha-1-acid glycoprotein. The transferred sialic acid is linked to galactose of Gal-beta-1,3-GalNAc through alpha-2,6-linkage.</text>
</comment>
<comment type="subcellular location">
    <subcellularLocation>
        <location evidence="2">Golgi apparatus membrane</location>
        <topology evidence="5">Single-pass type II membrane protein</topology>
    </subcellularLocation>
</comment>
<comment type="similarity">
    <text evidence="5">Belongs to the glycosyltransferase 29 family.</text>
</comment>
<evidence type="ECO:0000250" key="1">
    <source>
        <dbReference type="UniProtKB" id="Q94DD4"/>
    </source>
</evidence>
<evidence type="ECO:0000250" key="2">
    <source>
        <dbReference type="UniProtKB" id="Q9SGD2"/>
    </source>
</evidence>
<evidence type="ECO:0000255" key="3"/>
<evidence type="ECO:0000255" key="4">
    <source>
        <dbReference type="PROSITE-ProRule" id="PRU00498"/>
    </source>
</evidence>
<evidence type="ECO:0000305" key="5"/>
<evidence type="ECO:0000312" key="6">
    <source>
        <dbReference type="EMBL" id="EAY76560.1"/>
    </source>
</evidence>
<proteinExistence type="inferred from homology"/>